<gene>
    <name evidence="1" type="primary">thiC</name>
    <name type="ordered locus">BCAH820_5316</name>
</gene>
<proteinExistence type="inferred from homology"/>
<keyword id="KW-0004">4Fe-4S</keyword>
<keyword id="KW-0408">Iron</keyword>
<keyword id="KW-0411">Iron-sulfur</keyword>
<keyword id="KW-0456">Lyase</keyword>
<keyword id="KW-0479">Metal-binding</keyword>
<keyword id="KW-0949">S-adenosyl-L-methionine</keyword>
<keyword id="KW-0784">Thiamine biosynthesis</keyword>
<keyword id="KW-0862">Zinc</keyword>
<name>THIC_BACC0</name>
<accession>B7JGF0</accession>
<reference key="1">
    <citation type="submission" date="2008-10" db="EMBL/GenBank/DDBJ databases">
        <title>Genome sequence of Bacillus cereus AH820.</title>
        <authorList>
            <person name="Dodson R.J."/>
            <person name="Durkin A.S."/>
            <person name="Rosovitz M.J."/>
            <person name="Rasko D.A."/>
            <person name="Hoffmaster A."/>
            <person name="Ravel J."/>
            <person name="Sutton G."/>
        </authorList>
    </citation>
    <scope>NUCLEOTIDE SEQUENCE [LARGE SCALE GENOMIC DNA]</scope>
    <source>
        <strain>AH820</strain>
    </source>
</reference>
<evidence type="ECO:0000255" key="1">
    <source>
        <dbReference type="HAMAP-Rule" id="MF_00089"/>
    </source>
</evidence>
<evidence type="ECO:0000256" key="2">
    <source>
        <dbReference type="SAM" id="MobiDB-lite"/>
    </source>
</evidence>
<protein>
    <recommendedName>
        <fullName evidence="1">Phosphomethylpyrimidine synthase</fullName>
        <ecNumber evidence="1">4.1.99.17</ecNumber>
    </recommendedName>
    <alternativeName>
        <fullName evidence="1">Hydroxymethylpyrimidine phosphate synthase</fullName>
        <shortName evidence="1">HMP-P synthase</shortName>
        <shortName evidence="1">HMP-phosphate synthase</shortName>
        <shortName evidence="1">HMPP synthase</shortName>
    </alternativeName>
    <alternativeName>
        <fullName evidence="1">Thiamine biosynthesis protein ThiC</fullName>
    </alternativeName>
</protein>
<organism>
    <name type="scientific">Bacillus cereus (strain AH820)</name>
    <dbReference type="NCBI Taxonomy" id="405535"/>
    <lineage>
        <taxon>Bacteria</taxon>
        <taxon>Bacillati</taxon>
        <taxon>Bacillota</taxon>
        <taxon>Bacilli</taxon>
        <taxon>Bacillales</taxon>
        <taxon>Bacillaceae</taxon>
        <taxon>Bacillus</taxon>
        <taxon>Bacillus cereus group</taxon>
    </lineage>
</organism>
<feature type="chain" id="PRO_1000198045" description="Phosphomethylpyrimidine synthase">
    <location>
        <begin position="1"/>
        <end position="586"/>
    </location>
</feature>
<feature type="region of interest" description="Disordered" evidence="2">
    <location>
        <begin position="1"/>
        <end position="59"/>
    </location>
</feature>
<feature type="compositionally biased region" description="Basic and acidic residues" evidence="2">
    <location>
        <begin position="22"/>
        <end position="39"/>
    </location>
</feature>
<feature type="binding site" evidence="1">
    <location>
        <position position="193"/>
    </location>
    <ligand>
        <name>substrate</name>
    </ligand>
</feature>
<feature type="binding site" evidence="1">
    <location>
        <position position="222"/>
    </location>
    <ligand>
        <name>substrate</name>
    </ligand>
</feature>
<feature type="binding site" evidence="1">
    <location>
        <position position="251"/>
    </location>
    <ligand>
        <name>substrate</name>
    </ligand>
</feature>
<feature type="binding site" evidence="1">
    <location>
        <position position="287"/>
    </location>
    <ligand>
        <name>substrate</name>
    </ligand>
</feature>
<feature type="binding site" evidence="1">
    <location>
        <begin position="307"/>
        <end position="309"/>
    </location>
    <ligand>
        <name>substrate</name>
    </ligand>
</feature>
<feature type="binding site" evidence="1">
    <location>
        <begin position="348"/>
        <end position="351"/>
    </location>
    <ligand>
        <name>substrate</name>
    </ligand>
</feature>
<feature type="binding site" evidence="1">
    <location>
        <position position="387"/>
    </location>
    <ligand>
        <name>substrate</name>
    </ligand>
</feature>
<feature type="binding site" evidence="1">
    <location>
        <position position="391"/>
    </location>
    <ligand>
        <name>Zn(2+)</name>
        <dbReference type="ChEBI" id="CHEBI:29105"/>
    </ligand>
</feature>
<feature type="binding site" evidence="1">
    <location>
        <position position="414"/>
    </location>
    <ligand>
        <name>substrate</name>
    </ligand>
</feature>
<feature type="binding site" evidence="1">
    <location>
        <position position="455"/>
    </location>
    <ligand>
        <name>Zn(2+)</name>
        <dbReference type="ChEBI" id="CHEBI:29105"/>
    </ligand>
</feature>
<feature type="binding site" evidence="1">
    <location>
        <position position="535"/>
    </location>
    <ligand>
        <name>[4Fe-4S] cluster</name>
        <dbReference type="ChEBI" id="CHEBI:49883"/>
        <note>4Fe-4S-S-AdoMet</note>
    </ligand>
</feature>
<feature type="binding site" evidence="1">
    <location>
        <position position="538"/>
    </location>
    <ligand>
        <name>[4Fe-4S] cluster</name>
        <dbReference type="ChEBI" id="CHEBI:49883"/>
        <note>4Fe-4S-S-AdoMet</note>
    </ligand>
</feature>
<feature type="binding site" evidence="1">
    <location>
        <position position="543"/>
    </location>
    <ligand>
        <name>[4Fe-4S] cluster</name>
        <dbReference type="ChEBI" id="CHEBI:49883"/>
        <note>4Fe-4S-S-AdoMet</note>
    </ligand>
</feature>
<dbReference type="EC" id="4.1.99.17" evidence="1"/>
<dbReference type="EMBL" id="CP001283">
    <property type="protein sequence ID" value="ACK90361.1"/>
    <property type="molecule type" value="Genomic_DNA"/>
</dbReference>
<dbReference type="RefSeq" id="WP_000814466.1">
    <property type="nucleotide sequence ID" value="NC_011773.1"/>
</dbReference>
<dbReference type="SMR" id="B7JGF0"/>
<dbReference type="KEGG" id="bcu:BCAH820_5316"/>
<dbReference type="HOGENOM" id="CLU_013181_2_1_9"/>
<dbReference type="UniPathway" id="UPA00060"/>
<dbReference type="Proteomes" id="UP000001363">
    <property type="component" value="Chromosome"/>
</dbReference>
<dbReference type="GO" id="GO:0005829">
    <property type="term" value="C:cytosol"/>
    <property type="evidence" value="ECO:0007669"/>
    <property type="project" value="TreeGrafter"/>
</dbReference>
<dbReference type="GO" id="GO:0051539">
    <property type="term" value="F:4 iron, 4 sulfur cluster binding"/>
    <property type="evidence" value="ECO:0007669"/>
    <property type="project" value="UniProtKB-KW"/>
</dbReference>
<dbReference type="GO" id="GO:0016830">
    <property type="term" value="F:carbon-carbon lyase activity"/>
    <property type="evidence" value="ECO:0007669"/>
    <property type="project" value="InterPro"/>
</dbReference>
<dbReference type="GO" id="GO:0008270">
    <property type="term" value="F:zinc ion binding"/>
    <property type="evidence" value="ECO:0007669"/>
    <property type="project" value="UniProtKB-UniRule"/>
</dbReference>
<dbReference type="GO" id="GO:0009228">
    <property type="term" value="P:thiamine biosynthetic process"/>
    <property type="evidence" value="ECO:0007669"/>
    <property type="project" value="UniProtKB-KW"/>
</dbReference>
<dbReference type="GO" id="GO:0009229">
    <property type="term" value="P:thiamine diphosphate biosynthetic process"/>
    <property type="evidence" value="ECO:0007669"/>
    <property type="project" value="UniProtKB-UniRule"/>
</dbReference>
<dbReference type="FunFam" id="3.20.20.540:FF:000001">
    <property type="entry name" value="Phosphomethylpyrimidine synthase"/>
    <property type="match status" value="1"/>
</dbReference>
<dbReference type="Gene3D" id="6.10.250.620">
    <property type="match status" value="1"/>
</dbReference>
<dbReference type="Gene3D" id="3.20.20.540">
    <property type="entry name" value="Radical SAM ThiC family, central domain"/>
    <property type="match status" value="1"/>
</dbReference>
<dbReference type="HAMAP" id="MF_00089">
    <property type="entry name" value="ThiC"/>
    <property type="match status" value="1"/>
</dbReference>
<dbReference type="InterPro" id="IPR037509">
    <property type="entry name" value="ThiC"/>
</dbReference>
<dbReference type="InterPro" id="IPR025747">
    <property type="entry name" value="ThiC-associated_dom"/>
</dbReference>
<dbReference type="InterPro" id="IPR038521">
    <property type="entry name" value="ThiC/Bza_core_dom"/>
</dbReference>
<dbReference type="InterPro" id="IPR002817">
    <property type="entry name" value="ThiC/BzaA/B"/>
</dbReference>
<dbReference type="NCBIfam" id="NF006763">
    <property type="entry name" value="PRK09284.1"/>
    <property type="match status" value="1"/>
</dbReference>
<dbReference type="NCBIfam" id="NF009895">
    <property type="entry name" value="PRK13352.1"/>
    <property type="match status" value="1"/>
</dbReference>
<dbReference type="NCBIfam" id="TIGR00190">
    <property type="entry name" value="thiC"/>
    <property type="match status" value="1"/>
</dbReference>
<dbReference type="PANTHER" id="PTHR30557:SF1">
    <property type="entry name" value="PHOSPHOMETHYLPYRIMIDINE SYNTHASE, CHLOROPLASTIC"/>
    <property type="match status" value="1"/>
</dbReference>
<dbReference type="PANTHER" id="PTHR30557">
    <property type="entry name" value="THIAMINE BIOSYNTHESIS PROTEIN THIC"/>
    <property type="match status" value="1"/>
</dbReference>
<dbReference type="Pfam" id="PF13667">
    <property type="entry name" value="ThiC-associated"/>
    <property type="match status" value="1"/>
</dbReference>
<dbReference type="Pfam" id="PF01964">
    <property type="entry name" value="ThiC_Rad_SAM"/>
    <property type="match status" value="1"/>
</dbReference>
<dbReference type="SFLD" id="SFLDF00407">
    <property type="entry name" value="phosphomethylpyrimidine_syntha"/>
    <property type="match status" value="1"/>
</dbReference>
<dbReference type="SFLD" id="SFLDG01114">
    <property type="entry name" value="phosphomethylpyrimidine_syntha"/>
    <property type="match status" value="1"/>
</dbReference>
<dbReference type="SFLD" id="SFLDS00113">
    <property type="entry name" value="Radical_SAM_Phosphomethylpyrim"/>
    <property type="match status" value="1"/>
</dbReference>
<sequence length="586" mass="65771">MKQSVSAEQIELKSSLPGSKKVYVDGPREGMKVPMREIEQSDTNGVPNPPIRVYDTSGPYTDPAYKVELEKGIPTPRHSWILERGDVEAYEGREVKPEDDGVKVASKHTPVFPQMDRKPLRAKQGANVTQMHYARNGIITSEMEYVAIREGVDPEFVRKEIAEGRAILPANINHPEAEPMIIGRNFHVKVNANIGNSAVSSSIAEEVEKMTWATRWGADTIMDLSTGKNIHTTREWIIRNAPVPVGTVPIYQALEKVNGIAEDLTWEVYRDTLIEQAEQGVDYFTIHAGVLLRYIPITAKRTTGIVSRGGSIMAQWCLFHHKENFLYTHFEEICEIMKQYDVSFSLGDGLRPGSIADANDEAQFSELETLGELTKIAWKHDVQVMIEGPGHVPMHLIKENMEKELDICQGAPFYTLGPLTTDIAPGYDHITSAIGAAMIGWFGTAMLCYVTPKEHLGLPNKDDVREGVITYKIAAHAADLAKGHKTAHQRDDALSKARFEFRWRDQFNLSLDPERAMEYHDETLPAEGAKTAHFCSMCGPKFCSMRISHDIREYAKENDLETTEAIEKGMKEKAKEFKETGSHLYQ</sequence>
<comment type="function">
    <text evidence="1">Catalyzes the synthesis of the hydroxymethylpyrimidine phosphate (HMP-P) moiety of thiamine from aminoimidazole ribotide (AIR) in a radical S-adenosyl-L-methionine (SAM)-dependent reaction.</text>
</comment>
<comment type="catalytic activity">
    <reaction evidence="1">
        <text>5-amino-1-(5-phospho-beta-D-ribosyl)imidazole + S-adenosyl-L-methionine = 4-amino-2-methyl-5-(phosphooxymethyl)pyrimidine + CO + 5'-deoxyadenosine + formate + L-methionine + 3 H(+)</text>
        <dbReference type="Rhea" id="RHEA:24840"/>
        <dbReference type="ChEBI" id="CHEBI:15378"/>
        <dbReference type="ChEBI" id="CHEBI:15740"/>
        <dbReference type="ChEBI" id="CHEBI:17245"/>
        <dbReference type="ChEBI" id="CHEBI:17319"/>
        <dbReference type="ChEBI" id="CHEBI:57844"/>
        <dbReference type="ChEBI" id="CHEBI:58354"/>
        <dbReference type="ChEBI" id="CHEBI:59789"/>
        <dbReference type="ChEBI" id="CHEBI:137981"/>
        <dbReference type="EC" id="4.1.99.17"/>
    </reaction>
</comment>
<comment type="cofactor">
    <cofactor evidence="1">
        <name>[4Fe-4S] cluster</name>
        <dbReference type="ChEBI" id="CHEBI:49883"/>
    </cofactor>
    <text evidence="1">Binds 1 [4Fe-4S] cluster per subunit. The cluster is coordinated with 3 cysteines and an exchangeable S-adenosyl-L-methionine.</text>
</comment>
<comment type="pathway">
    <text evidence="1">Cofactor biosynthesis; thiamine diphosphate biosynthesis.</text>
</comment>
<comment type="similarity">
    <text evidence="1">Belongs to the ThiC family.</text>
</comment>